<reference key="1">
    <citation type="journal article" date="2008" name="J. Bacteriol.">
        <title>The complete genome sequence of Escherichia coli DH10B: insights into the biology of a laboratory workhorse.</title>
        <authorList>
            <person name="Durfee T."/>
            <person name="Nelson R."/>
            <person name="Baldwin S."/>
            <person name="Plunkett G. III"/>
            <person name="Burland V."/>
            <person name="Mau B."/>
            <person name="Petrosino J.F."/>
            <person name="Qin X."/>
            <person name="Muzny D.M."/>
            <person name="Ayele M."/>
            <person name="Gibbs R.A."/>
            <person name="Csorgo B."/>
            <person name="Posfai G."/>
            <person name="Weinstock G.M."/>
            <person name="Blattner F.R."/>
        </authorList>
    </citation>
    <scope>NUCLEOTIDE SEQUENCE [LARGE SCALE GENOMIC DNA]</scope>
    <source>
        <strain>K12 / DH10B</strain>
    </source>
</reference>
<evidence type="ECO:0000255" key="1">
    <source>
        <dbReference type="HAMAP-Rule" id="MF_01165"/>
    </source>
</evidence>
<protein>
    <recommendedName>
        <fullName evidence="1">Undecaprenyl phosphate-alpha-4-amino-4-deoxy-L-arabinose arabinosyl transferase</fullName>
        <ecNumber evidence="1">2.4.2.43</ecNumber>
    </recommendedName>
    <alternativeName>
        <fullName evidence="1">4-amino-4-deoxy-L-arabinose lipid A transferase</fullName>
    </alternativeName>
    <alternativeName>
        <fullName evidence="1">Lipid IV(A) 4-amino-4-deoxy-L-arabinosyltransferase</fullName>
    </alternativeName>
    <alternativeName>
        <fullName evidence="1">Undecaprenyl phosphate-alpha-L-Ara4N transferase</fullName>
    </alternativeName>
</protein>
<comment type="function">
    <text evidence="1">Catalyzes the transfer of the L-Ara4N moiety of the glycolipid undecaprenyl phosphate-alpha-L-Ara4N to lipid A. The modified arabinose is attached to lipid A and is required for resistance to polymyxin and cationic antimicrobial peptides.</text>
</comment>
<comment type="catalytic activity">
    <reaction evidence="1">
        <text>4-amino-4-deoxy-alpha-L-arabinopyranosyl di-trans,octa-cis-undecaprenyl phosphate + lipid IVA = lipid IIA + di-trans,octa-cis-undecaprenyl phosphate.</text>
        <dbReference type="EC" id="2.4.2.43"/>
    </reaction>
</comment>
<comment type="pathway">
    <text evidence="1">Lipopolysaccharide metabolism; 4-amino-4-deoxy-beta-L-arabinose-lipid A biosynthesis.</text>
</comment>
<comment type="subcellular location">
    <subcellularLocation>
        <location evidence="1">Cell inner membrane</location>
        <topology evidence="1">Multi-pass membrane protein</topology>
    </subcellularLocation>
</comment>
<comment type="similarity">
    <text evidence="1">Belongs to the glycosyltransferase 83 family.</text>
</comment>
<accession>B1X8X0</accession>
<feature type="chain" id="PRO_0000380002" description="Undecaprenyl phosphate-alpha-4-amino-4-deoxy-L-arabinose arabinosyl transferase">
    <location>
        <begin position="1"/>
        <end position="550"/>
    </location>
</feature>
<feature type="transmembrane region" description="Helical" evidence="1">
    <location>
        <begin position="7"/>
        <end position="27"/>
    </location>
</feature>
<feature type="transmembrane region" description="Helical" evidence="1">
    <location>
        <begin position="81"/>
        <end position="101"/>
    </location>
</feature>
<feature type="transmembrane region" description="Helical" evidence="1">
    <location>
        <begin position="111"/>
        <end position="133"/>
    </location>
</feature>
<feature type="transmembrane region" description="Helical" evidence="1">
    <location>
        <begin position="137"/>
        <end position="154"/>
    </location>
</feature>
<feature type="transmembrane region" description="Helical" evidence="1">
    <location>
        <begin position="165"/>
        <end position="185"/>
    </location>
</feature>
<feature type="transmembrane region" description="Helical" evidence="1">
    <location>
        <begin position="204"/>
        <end position="224"/>
    </location>
</feature>
<feature type="transmembrane region" description="Helical" evidence="1">
    <location>
        <begin position="255"/>
        <end position="275"/>
    </location>
</feature>
<feature type="transmembrane region" description="Helical" evidence="1">
    <location>
        <begin position="288"/>
        <end position="308"/>
    </location>
</feature>
<feature type="transmembrane region" description="Helical" evidence="1">
    <location>
        <begin position="315"/>
        <end position="335"/>
    </location>
</feature>
<feature type="transmembrane region" description="Helical" evidence="1">
    <location>
        <begin position="346"/>
        <end position="366"/>
    </location>
</feature>
<feature type="transmembrane region" description="Helical" evidence="1">
    <location>
        <begin position="382"/>
        <end position="402"/>
    </location>
</feature>
<feature type="transmembrane region" description="Helical" evidence="1">
    <location>
        <begin position="406"/>
        <end position="426"/>
    </location>
</feature>
<sequence>MKSVRYLIGLFAFIACYYLLPISTRLLWQPDETRYAEISREMLASGDWIVPHLLGLRYFEKPIAGYWINSIGQWLFGANNFGVRAGVIFATLLTAALVTWFTLRLWRDKRLALLATVIYLSLFIVYAIGTYAVLDPFIAFWLVAGMCSFWLAMQAQTWKGKSAGFLLLGITCGMGVMTKGFLALAVPVLSVLPWVATQKRWKDLFIYGWLAVISCVLTVLPWGLAIAQREPNFWHYFFWVEHIQRFALDDAQHRAPFWYYVPVIIAGSLPWLGLLPGALYTGWKNRKHSATVYLLSWTIMPLLFFSVAKGKLPTYILSCFASLAMLMAHYALLAAKNNPLALRINGWINIAFGVTGIIATFVVSPWGPMNTPVWQTFESYKVFCAWSIFSLWAFFGWYTLTNVEKTWPFAALCPLGLALLVGFSIPDRVMEGKHPQFFVEMTQESLQPSRYILTDSVGVAAGLAWSLQRDDIIMYRQTGELKYGLNYPDAKGRFVSGDEFANWLNQHRQEGIITLVLSVDRDEDINSLAIPPADAIDRQERLVLIQYRPK</sequence>
<dbReference type="EC" id="2.4.2.43" evidence="1"/>
<dbReference type="EMBL" id="CP000948">
    <property type="protein sequence ID" value="ACB03417.1"/>
    <property type="molecule type" value="Genomic_DNA"/>
</dbReference>
<dbReference type="RefSeq" id="WP_000844057.1">
    <property type="nucleotide sequence ID" value="NC_010473.1"/>
</dbReference>
<dbReference type="SMR" id="B1X8X0"/>
<dbReference type="CAZy" id="GT83">
    <property type="family name" value="Glycosyltransferase Family 83"/>
</dbReference>
<dbReference type="KEGG" id="ecd:ECDH10B_2417"/>
<dbReference type="HOGENOM" id="CLU_019200_2_1_6"/>
<dbReference type="UniPathway" id="UPA00037"/>
<dbReference type="GO" id="GO:0005886">
    <property type="term" value="C:plasma membrane"/>
    <property type="evidence" value="ECO:0007669"/>
    <property type="project" value="UniProtKB-SubCell"/>
</dbReference>
<dbReference type="GO" id="GO:0103015">
    <property type="term" value="F:4-amino-4-deoxy-L-arabinose transferase activity"/>
    <property type="evidence" value="ECO:0007669"/>
    <property type="project" value="UniProtKB-EC"/>
</dbReference>
<dbReference type="GO" id="GO:0000030">
    <property type="term" value="F:mannosyltransferase activity"/>
    <property type="evidence" value="ECO:0007669"/>
    <property type="project" value="InterPro"/>
</dbReference>
<dbReference type="GO" id="GO:0009245">
    <property type="term" value="P:lipid A biosynthetic process"/>
    <property type="evidence" value="ECO:0007669"/>
    <property type="project" value="UniProtKB-UniRule"/>
</dbReference>
<dbReference type="GO" id="GO:0009103">
    <property type="term" value="P:lipopolysaccharide biosynthetic process"/>
    <property type="evidence" value="ECO:0007669"/>
    <property type="project" value="UniProtKB-KW"/>
</dbReference>
<dbReference type="GO" id="GO:0006493">
    <property type="term" value="P:protein O-linked glycosylation"/>
    <property type="evidence" value="ECO:0007669"/>
    <property type="project" value="InterPro"/>
</dbReference>
<dbReference type="GO" id="GO:0010041">
    <property type="term" value="P:response to iron(III) ion"/>
    <property type="evidence" value="ECO:0007669"/>
    <property type="project" value="TreeGrafter"/>
</dbReference>
<dbReference type="HAMAP" id="MF_01165">
    <property type="entry name" value="ArnT_transfer"/>
    <property type="match status" value="1"/>
</dbReference>
<dbReference type="InterPro" id="IPR022839">
    <property type="entry name" value="ArnT_tfrase"/>
</dbReference>
<dbReference type="InterPro" id="IPR003342">
    <property type="entry name" value="Glyco_trans_39/83"/>
</dbReference>
<dbReference type="InterPro" id="IPR050297">
    <property type="entry name" value="LipidA_mod_glycosyltrf_83"/>
</dbReference>
<dbReference type="NCBIfam" id="NF009784">
    <property type="entry name" value="PRK13279.1"/>
    <property type="match status" value="1"/>
</dbReference>
<dbReference type="PANTHER" id="PTHR33908">
    <property type="entry name" value="MANNOSYLTRANSFERASE YKCB-RELATED"/>
    <property type="match status" value="1"/>
</dbReference>
<dbReference type="PANTHER" id="PTHR33908:SF3">
    <property type="entry name" value="UNDECAPRENYL PHOSPHATE-ALPHA-4-AMINO-4-DEOXY-L-ARABINOSE ARABINOSYL TRANSFERASE"/>
    <property type="match status" value="1"/>
</dbReference>
<dbReference type="Pfam" id="PF02366">
    <property type="entry name" value="PMT"/>
    <property type="match status" value="1"/>
</dbReference>
<organism>
    <name type="scientific">Escherichia coli (strain K12 / DH10B)</name>
    <dbReference type="NCBI Taxonomy" id="316385"/>
    <lineage>
        <taxon>Bacteria</taxon>
        <taxon>Pseudomonadati</taxon>
        <taxon>Pseudomonadota</taxon>
        <taxon>Gammaproteobacteria</taxon>
        <taxon>Enterobacterales</taxon>
        <taxon>Enterobacteriaceae</taxon>
        <taxon>Escherichia</taxon>
    </lineage>
</organism>
<keyword id="KW-0997">Cell inner membrane</keyword>
<keyword id="KW-1003">Cell membrane</keyword>
<keyword id="KW-0328">Glycosyltransferase</keyword>
<keyword id="KW-0441">Lipid A biosynthesis</keyword>
<keyword id="KW-0444">Lipid biosynthesis</keyword>
<keyword id="KW-0443">Lipid metabolism</keyword>
<keyword id="KW-0448">Lipopolysaccharide biosynthesis</keyword>
<keyword id="KW-0472">Membrane</keyword>
<keyword id="KW-0808">Transferase</keyword>
<keyword id="KW-0812">Transmembrane</keyword>
<keyword id="KW-1133">Transmembrane helix</keyword>
<proteinExistence type="inferred from homology"/>
<name>ARNT_ECODH</name>
<gene>
    <name evidence="1" type="primary">arnT</name>
    <name type="ordered locus">ECDH10B_2417</name>
</gene>